<name>Y2135_DICDI</name>
<keyword id="KW-0325">Glycoprotein</keyword>
<keyword id="KW-1185">Reference proteome</keyword>
<keyword id="KW-0732">Signal</keyword>
<dbReference type="EMBL" id="AAFI02000220">
    <property type="protein sequence ID" value="EAL60537.1"/>
    <property type="molecule type" value="Genomic_DNA"/>
</dbReference>
<dbReference type="RefSeq" id="XP_628955.1">
    <property type="nucleotide sequence ID" value="XM_628953.1"/>
</dbReference>
<dbReference type="GlyGen" id="Q54B95">
    <property type="glycosylation" value="1 site"/>
</dbReference>
<dbReference type="PaxDb" id="44689-DDB0192135"/>
<dbReference type="EnsemblProtists" id="EAL60537">
    <property type="protein sequence ID" value="EAL60537"/>
    <property type="gene ID" value="DDB_G0293808"/>
</dbReference>
<dbReference type="GeneID" id="8629432"/>
<dbReference type="KEGG" id="ddi:DDB_G0293808"/>
<dbReference type="dictyBase" id="DDB_G0293808"/>
<dbReference type="VEuPathDB" id="AmoebaDB:DDB_G0293808"/>
<dbReference type="HOGENOM" id="CLU_2445402_0_0_1"/>
<dbReference type="InParanoid" id="Q54B95"/>
<dbReference type="PRO" id="PR:Q54B95"/>
<dbReference type="Proteomes" id="UP000002195">
    <property type="component" value="Chromosome 6"/>
</dbReference>
<evidence type="ECO:0000255" key="1"/>
<evidence type="ECO:0000256" key="2">
    <source>
        <dbReference type="SAM" id="MobiDB-lite"/>
    </source>
</evidence>
<accession>Q54B95</accession>
<sequence>MFKFSIPLLLFIFLFFSCINSITHIRVGAFYPPPAHLQPQSGFIWEFLGTRNPDKSNEKLPERILSGSSGSCSSCSISSSNGSSSRSSKQ</sequence>
<feature type="signal peptide" evidence="1">
    <location>
        <begin position="1"/>
        <end position="21"/>
    </location>
</feature>
<feature type="chain" id="PRO_0000343935" description="Putative uncharacterized protein DDB_G0293808">
    <location>
        <begin position="22"/>
        <end position="90"/>
    </location>
</feature>
<feature type="region of interest" description="Disordered" evidence="2">
    <location>
        <begin position="56"/>
        <end position="90"/>
    </location>
</feature>
<feature type="compositionally biased region" description="Low complexity" evidence="2">
    <location>
        <begin position="66"/>
        <end position="90"/>
    </location>
</feature>
<feature type="glycosylation site" description="N-linked (GlcNAc...) asparagine" evidence="1">
    <location>
        <position position="81"/>
    </location>
</feature>
<gene>
    <name type="ORF">DDB_G0293808</name>
</gene>
<proteinExistence type="inferred from homology"/>
<reference key="1">
    <citation type="journal article" date="2005" name="Nature">
        <title>The genome of the social amoeba Dictyostelium discoideum.</title>
        <authorList>
            <person name="Eichinger L."/>
            <person name="Pachebat J.A."/>
            <person name="Gloeckner G."/>
            <person name="Rajandream M.A."/>
            <person name="Sucgang R."/>
            <person name="Berriman M."/>
            <person name="Song J."/>
            <person name="Olsen R."/>
            <person name="Szafranski K."/>
            <person name="Xu Q."/>
            <person name="Tunggal B."/>
            <person name="Kummerfeld S."/>
            <person name="Madera M."/>
            <person name="Konfortov B.A."/>
            <person name="Rivero F."/>
            <person name="Bankier A.T."/>
            <person name="Lehmann R."/>
            <person name="Hamlin N."/>
            <person name="Davies R."/>
            <person name="Gaudet P."/>
            <person name="Fey P."/>
            <person name="Pilcher K."/>
            <person name="Chen G."/>
            <person name="Saunders D."/>
            <person name="Sodergren E.J."/>
            <person name="Davis P."/>
            <person name="Kerhornou A."/>
            <person name="Nie X."/>
            <person name="Hall N."/>
            <person name="Anjard C."/>
            <person name="Hemphill L."/>
            <person name="Bason N."/>
            <person name="Farbrother P."/>
            <person name="Desany B."/>
            <person name="Just E."/>
            <person name="Morio T."/>
            <person name="Rost R."/>
            <person name="Churcher C.M."/>
            <person name="Cooper J."/>
            <person name="Haydock S."/>
            <person name="van Driessche N."/>
            <person name="Cronin A."/>
            <person name="Goodhead I."/>
            <person name="Muzny D.M."/>
            <person name="Mourier T."/>
            <person name="Pain A."/>
            <person name="Lu M."/>
            <person name="Harper D."/>
            <person name="Lindsay R."/>
            <person name="Hauser H."/>
            <person name="James K.D."/>
            <person name="Quiles M."/>
            <person name="Madan Babu M."/>
            <person name="Saito T."/>
            <person name="Buchrieser C."/>
            <person name="Wardroper A."/>
            <person name="Felder M."/>
            <person name="Thangavelu M."/>
            <person name="Johnson D."/>
            <person name="Knights A."/>
            <person name="Loulseged H."/>
            <person name="Mungall K.L."/>
            <person name="Oliver K."/>
            <person name="Price C."/>
            <person name="Quail M.A."/>
            <person name="Urushihara H."/>
            <person name="Hernandez J."/>
            <person name="Rabbinowitsch E."/>
            <person name="Steffen D."/>
            <person name="Sanders M."/>
            <person name="Ma J."/>
            <person name="Kohara Y."/>
            <person name="Sharp S."/>
            <person name="Simmonds M.N."/>
            <person name="Spiegler S."/>
            <person name="Tivey A."/>
            <person name="Sugano S."/>
            <person name="White B."/>
            <person name="Walker D."/>
            <person name="Woodward J.R."/>
            <person name="Winckler T."/>
            <person name="Tanaka Y."/>
            <person name="Shaulsky G."/>
            <person name="Schleicher M."/>
            <person name="Weinstock G.M."/>
            <person name="Rosenthal A."/>
            <person name="Cox E.C."/>
            <person name="Chisholm R.L."/>
            <person name="Gibbs R.A."/>
            <person name="Loomis W.F."/>
            <person name="Platzer M."/>
            <person name="Kay R.R."/>
            <person name="Williams J.G."/>
            <person name="Dear P.H."/>
            <person name="Noegel A.A."/>
            <person name="Barrell B.G."/>
            <person name="Kuspa A."/>
        </authorList>
    </citation>
    <scope>NUCLEOTIDE SEQUENCE [LARGE SCALE GENOMIC DNA]</scope>
    <source>
        <strain>AX4</strain>
    </source>
</reference>
<organism>
    <name type="scientific">Dictyostelium discoideum</name>
    <name type="common">Social amoeba</name>
    <dbReference type="NCBI Taxonomy" id="44689"/>
    <lineage>
        <taxon>Eukaryota</taxon>
        <taxon>Amoebozoa</taxon>
        <taxon>Evosea</taxon>
        <taxon>Eumycetozoa</taxon>
        <taxon>Dictyostelia</taxon>
        <taxon>Dictyosteliales</taxon>
        <taxon>Dictyosteliaceae</taxon>
        <taxon>Dictyostelium</taxon>
    </lineage>
</organism>
<protein>
    <recommendedName>
        <fullName>Putative uncharacterized protein DDB_G0293808</fullName>
    </recommendedName>
</protein>